<evidence type="ECO:0000250" key="1">
    <source>
        <dbReference type="UniProtKB" id="A0A144KPJ6"/>
    </source>
</evidence>
<evidence type="ECO:0000255" key="2"/>
<evidence type="ECO:0000255" key="3">
    <source>
        <dbReference type="PROSITE-ProRule" id="PRU00258"/>
    </source>
</evidence>
<evidence type="ECO:0000269" key="4">
    <source>
    </source>
</evidence>
<evidence type="ECO:0000269" key="5">
    <source>
    </source>
</evidence>
<evidence type="ECO:0000269" key="6">
    <source>
    </source>
</evidence>
<evidence type="ECO:0000269" key="7">
    <source>
    </source>
</evidence>
<evidence type="ECO:0000303" key="8">
    <source>
    </source>
</evidence>
<evidence type="ECO:0000303" key="9">
    <source>
    </source>
</evidence>
<evidence type="ECO:0000305" key="10"/>
<evidence type="ECO:0000305" key="11">
    <source>
    </source>
</evidence>
<organism>
    <name type="scientific">Cochliobolus heterostrophus (strain C4 / ATCC 48331 / race T)</name>
    <name type="common">Southern corn leaf blight fungus</name>
    <name type="synonym">Bipolaris maydis</name>
    <dbReference type="NCBI Taxonomy" id="665024"/>
    <lineage>
        <taxon>Eukaryota</taxon>
        <taxon>Fungi</taxon>
        <taxon>Dikarya</taxon>
        <taxon>Ascomycota</taxon>
        <taxon>Pezizomycotina</taxon>
        <taxon>Dothideomycetes</taxon>
        <taxon>Pleosporomycetidae</taxon>
        <taxon>Pleosporales</taxon>
        <taxon>Pleosporineae</taxon>
        <taxon>Pleosporaceae</taxon>
        <taxon>Bipolaris</taxon>
    </lineage>
</organism>
<comment type="function">
    <text evidence="4 5 6 7">Nonribosomal peptide synthetase; part of the gene cluster that mediates the biosynthesis of hydroxamate-containing siderophores that play a critical role in virulence (PubMed:15755917, PubMed:17056706, PubMed:23980626). Cochliobolus heterostrophus produces extracellular coprogen-type siderophores including coprogen, neocoprogen I and neocoprogen II, as well as the intracellular siderophore ferricrocin (PubMed:17056706). The role of extracellular siderophores is to supply iron to the fungus during plant infection, and the intracellular ferricrocin is required for intracellular iron distribution and storage with a crucial role in ascus and ascospore development (PubMed:17056706, PubMed:17601875). SIDA2 catalyzes the conversion of L-ornithine to N(5)-hydroxyornithine, the first step in the biosynthesis of all hydroxamate-containing siderophores (PubMed:23980626). The assembly of extracellular coprogen-type siderophores is then performed by the nonribosomal peptide synthetase (NRPS) NPS6 whereas the intracellular siderophore ferricrocin is assembled by NPS2 (PubMed:17056706, PubMed:17601875).</text>
</comment>
<comment type="pathway">
    <text evidence="5 7">Siderophore biosynthesis.</text>
</comment>
<comment type="induction">
    <text evidence="4 5 7">Expression is up-regulated under iron depletion (PubMed:15755917, PubMed:17056706). Expression is repressed by the transcription repressor SRE1 under iron replete conditions (PubMed:23980626).</text>
</comment>
<comment type="domain">
    <text evidence="1 11">NRP synthetases are composed of discrete domains (adenylation (A), thiolation (T) or peptidyl carrier protein (PCP) and condensation (C) domains) which when grouped together are referred to as a single module (By similarity). Each module is responsible for the recognition (via the A domain) and incorporation of a single amino acid into the growing peptide product (By similarity). Thus, an NRP synthetase is generally composed of one or more modules and can terminate in a thioesterase domain (TE) that releases the newly synthesized peptide from the enzyme (By similarity). Occasionally, methyltransferase domains (responsible for amino acid methylation) are present within the NRP synthetase (By similarity). NPS6 contains a degenerate A domain (dA) in the second module and has the following architecture: A-T-C-dA-T-T-C (PubMed:15755917).</text>
</comment>
<comment type="disruption phenotype">
    <text evidence="4 5 7">Leads to increased sensitivity to oxidative stress and to iron depletion (PubMed:15755917, PubMed:17056706). Reduces the virulence toward maize plantst (PubMed:15755917, PubMed:23980626). Causes a defect in colonization in planta, but not in prepenetration growth or in penetration (PubMed:17056706).</text>
</comment>
<comment type="similarity">
    <text evidence="10">Belongs to the NRP synthetase family.</text>
</comment>
<name>NPS6_COCH4</name>
<sequence>MARHQAVSQLHFFALILESLFKGADHPLSHFHNVSEDELDELWSWNTPLQPELRFCMHEKVSERAALHPEKIAIDAWDGTLTYGQIEDYSDKLAKLLRLLDDSSNRIIPVLFEKSRWTSVAVLAIMKSGACFALLDPAQPEGRLRAVVQQVNAKIFLSSKAQSTLAARVAPAATIIPISKSKFNKIFSPYTAEQPNTTLPPVSPDQPLYIQFTSGSTGVPKGCILTHSQYTSGAIPRAAAVGYYPHSRVLDFASYAFDVCIDSMLCTLAHGATLCTPSDERRMNDMSGAMRDMQVTFAGMTPSVARTLEVDILNNLESIALGGEGVSISDAMSWGQRTRVVNAYGPSEATVGATINDNVAAKPYITMGKRKGCALWLSDPENHNKLVPVGAVGELLIEGPIVGNGYLNNPSKTKEVFIEDPEFLLKGSKSYPGRHGRIYKTGDLVRFDPDGDGEPIFVGRQDQQVKLRGQRIELAEIEFNMQKHLPPDTQLAAEVIKPSGGGEQTLVAFLVEQKKNGMRHLDGNVFGSFTNKFQDALRDMTKQLFVDLPSYMIPSAYIPLWKMPLLVSCKTDRKRLREIGASVTRQDLRRFNSAVSEKKEATTEMELKLQSLWAKLLGGDADFSANDNFFSMGGDSLRAMRLVAAARDEGVVLSVPDIMLNPTLSSMAEKAKPVSAEETSDVPPFSMIAKDWDVDAARQESARLCGVDVANVEDVYPCTPLQEGLIALSAKFQDAYVAQRVATLPAETAVRLKEAFDTAVQGSPILRTRIINVSGRGLFQVVLKDGQLVREYSTEVSEYLRLDRNEPMDLGTALFRYGLVEEPGSDKMNFVITMHHAVYDGWSMPLVFDRVNRAFNGLHTERPSSFKHFIKHLISLDPADAQQYWKERLEGTIPHQFPPLPQKGYTTQADSLLEHYVTVPTSAHSKLTLATIIRGAWALVSSLYMGHPDIVFGETLTGRSAPVPGIEQIEGPMITTVPIRVRLSLDRPIAEYLQKIHAQTVKQIPHEHLGLQNIRRLSKDARVACDLRTGLVLHPKEDEDWGTVDIRNPANTFLPANDAEGAREALKFNTYALMLVCTLEENGFLVMASFDSNCISKEAMERVLAVLDRIVHAFLGNPESKLGDVAVLDPVEAQDAEAMRPRDVMSDSALGMSPVDGPESMDASLKELSPNEEKLRSILGRILGMKETDIRPSDSFFDLGGDSIGAMRLVSDARAQGLNLTVAQVFQSSSLSDLAASASNEREDKLAEILSRILGMAKTDIKSSDSFFELGGDSIGAMRLVSDARAQGLNITVAQVFQSKSLAELASSAEEETPSQPRVDTDAPFIALGKDANLHSPDRVGLYLENQGWEITNIYPTRPLQQLAVEGTVDLPRYSLRYELIKFATPIDRQRLEQACQELVARNEVLRTVFVKDDGLTLGVVLSSLVVPYTETAVPDGEDADAFIQAGIKQDIEAPKPYGSSFVAFNLFTHTNGASTLVFRISHAQYDEICLPILFEQLSALYAGTTVPETVPFSKHINHVVLDNIPKAIPYWKNLLSGSEMTVLKPSIPLTHRGPADIYKEFDISRRPANITIGSLPTAAWALVLSRRLSRTDVVFGEVVSGRNVGAPNADRIFGPTWQYIPFRVAFSKSWSYLDLLRYVQDQHMTSAAYESMGFSEIVKNCTHWDPESVQWFDTVVHQAPAWVEEMPFGNGVEAKFQTLYPHAEPLREWKCQAFVKDGGRKLGIEIVTFEEWIGEAEGVLEEVGKALECLMEGRAGESIF</sequence>
<reference key="1">
    <citation type="journal article" date="2005" name="Eukaryot. Cell">
        <title>Functional analysis of all nonribosomal peptide synthetases in Cochliobolus heterostrophus reveals a factor, NPS6, involved in virulence and resistance to oxidative stress.</title>
        <authorList>
            <person name="Lee B.N."/>
            <person name="Kroken S."/>
            <person name="Chou D.Y."/>
            <person name="Robbertse B."/>
            <person name="Yoder O.C."/>
            <person name="Turgeon B.G."/>
        </authorList>
    </citation>
    <scope>NUCLEOTIDE SEQUENCE [GENOMIC DNA]</scope>
    <scope>FUNCTION</scope>
    <scope>INDUCTION</scope>
    <scope>DISRUPTION PHENOTYPE</scope>
    <scope>DOMAIN</scope>
    <source>
        <strain>C4 / ATCC 48331 / race T</strain>
    </source>
</reference>
<reference key="2">
    <citation type="journal article" date="2012" name="PLoS Pathog.">
        <title>Diverse lifestyles and strategies of plant pathogenesis encoded in the genomes of eighteen Dothideomycetes fungi.</title>
        <authorList>
            <person name="Ohm R.A."/>
            <person name="Feau N."/>
            <person name="Henrissat B."/>
            <person name="Schoch C.L."/>
            <person name="Horwitz B.A."/>
            <person name="Barry K.W."/>
            <person name="Condon B.J."/>
            <person name="Copeland A.C."/>
            <person name="Dhillon B."/>
            <person name="Glaser F."/>
            <person name="Hesse C.N."/>
            <person name="Kosti I."/>
            <person name="LaButti K."/>
            <person name="Lindquist E.A."/>
            <person name="Lucas S."/>
            <person name="Salamov A.A."/>
            <person name="Bradshaw R.E."/>
            <person name="Ciuffetti L."/>
            <person name="Hamelin R.C."/>
            <person name="Kema G.H.J."/>
            <person name="Lawrence C."/>
            <person name="Scott J.A."/>
            <person name="Spatafora J.W."/>
            <person name="Turgeon B.G."/>
            <person name="de Wit P.J.G.M."/>
            <person name="Zhong S."/>
            <person name="Goodwin S.B."/>
            <person name="Grigoriev I.V."/>
        </authorList>
    </citation>
    <scope>NUCLEOTIDE SEQUENCE [LARGE SCALE GENOMIC DNA]</scope>
    <source>
        <strain>C4 / ATCC 48331 / race T</strain>
    </source>
</reference>
<reference key="3">
    <citation type="journal article" date="2013" name="PLoS Genet.">
        <title>Comparative genome structure, secondary metabolite, and effector coding capacity across Cochliobolus pathogens.</title>
        <authorList>
            <person name="Condon B.J."/>
            <person name="Leng Y."/>
            <person name="Wu D."/>
            <person name="Bushley K.E."/>
            <person name="Ohm R.A."/>
            <person name="Otillar R."/>
            <person name="Martin J."/>
            <person name="Schackwitz W."/>
            <person name="Grimwood J."/>
            <person name="MohdZainudin N."/>
            <person name="Xue C."/>
            <person name="Wang R."/>
            <person name="Manning V.A."/>
            <person name="Dhillon B."/>
            <person name="Tu Z.J."/>
            <person name="Steffenson B.J."/>
            <person name="Salamov A."/>
            <person name="Sun H."/>
            <person name="Lowry S."/>
            <person name="LaButti K."/>
            <person name="Han J."/>
            <person name="Copeland A."/>
            <person name="Lindquist E."/>
            <person name="Barry K."/>
            <person name="Schmutz J."/>
            <person name="Baker S.E."/>
            <person name="Ciuffetti L.M."/>
            <person name="Grigoriev I.V."/>
            <person name="Zhong S."/>
            <person name="Turgeon B.G."/>
        </authorList>
    </citation>
    <scope>NUCLEOTIDE SEQUENCE [LARGE SCALE GENOMIC DNA]</scope>
    <source>
        <strain>C4 / ATCC 48331 / race T</strain>
    </source>
</reference>
<reference key="4">
    <citation type="journal article" date="2006" name="Plant Cell">
        <title>NPS6, encoding a nonribosomal peptide synthetase involved in siderophore-mediated iron metabolism, is a conserved virulence determinant of plant pathogenic ascomycetes.</title>
        <authorList>
            <person name="Oide S."/>
            <person name="Moeder W."/>
            <person name="Krasnoff S."/>
            <person name="Gibson D."/>
            <person name="Haas H."/>
            <person name="Yoshioka K."/>
            <person name="Turgeon B.G."/>
        </authorList>
    </citation>
    <scope>FUNCTION</scope>
    <scope>DISRUPTION PHENOTYPE</scope>
    <scope>INDUCTION</scope>
    <scope>PATHWAY</scope>
</reference>
<reference key="5">
    <citation type="journal article" date="2007" name="Eukaryot. Cell">
        <title>Intracellular siderophores are essential for ascomycete sexual development in heterothallic Cochliobolus heterostrophus and homothallic Gibberella zeae.</title>
        <authorList>
            <person name="Oide S."/>
            <person name="Krasnoff S.B."/>
            <person name="Gibson D.M."/>
            <person name="Turgeon B.G."/>
        </authorList>
    </citation>
    <scope>FUNCTION</scope>
</reference>
<reference key="6">
    <citation type="journal article" date="2013" name="Mol. Plant Microbe Interact.">
        <title>Iron, oxidative stress, and virulence: roles of iron-sensitive transcription factor Sre1 and the redox sensor ChAp1 in the maize pathogen Cochliobolus heterostrophus.</title>
        <authorList>
            <person name="Zhang N."/>
            <person name="MohdZainudin N.A."/>
            <person name="Scher K."/>
            <person name="Condon B.J."/>
            <person name="Horwitz B.A."/>
            <person name="Turgeon B.G."/>
        </authorList>
    </citation>
    <scope>INDUCTION</scope>
    <scope>FUNCTION</scope>
    <scope>DISRUPTION PHENOTYPE</scope>
    <scope>PATHWAY</scope>
</reference>
<gene>
    <name evidence="8" type="primary">NPS6</name>
    <name type="ORF">COCC4DRAFT_154881</name>
</gene>
<accession>Q5D6D3</accession>
<accession>N4X0N9</accession>
<proteinExistence type="evidence at transcript level"/>
<keyword id="KW-0436">Ligase</keyword>
<keyword id="KW-0511">Multifunctional enzyme</keyword>
<keyword id="KW-0596">Phosphopantetheine</keyword>
<keyword id="KW-0597">Phosphoprotein</keyword>
<dbReference type="EC" id="6.3.2.-" evidence="11"/>
<dbReference type="EMBL" id="AY884191">
    <property type="protein sequence ID" value="AAX09988.1"/>
    <property type="molecule type" value="Genomic_DNA"/>
</dbReference>
<dbReference type="EMBL" id="KB733499">
    <property type="protein sequence ID" value="ENH98811.1"/>
    <property type="molecule type" value="Genomic_DNA"/>
</dbReference>
<dbReference type="RefSeq" id="XP_014072724.1">
    <property type="nucleotide sequence ID" value="XM_014217249.1"/>
</dbReference>
<dbReference type="SMR" id="Q5D6D3"/>
<dbReference type="GeneID" id="25839302"/>
<dbReference type="HOGENOM" id="CLU_000022_60_2_1"/>
<dbReference type="OrthoDB" id="416786at2759"/>
<dbReference type="PHI-base" id="PHI:416"/>
<dbReference type="PHI-base" id="PHI:4232"/>
<dbReference type="Proteomes" id="UP000012338">
    <property type="component" value="Unassembled WGS sequence"/>
</dbReference>
<dbReference type="GO" id="GO:0005737">
    <property type="term" value="C:cytoplasm"/>
    <property type="evidence" value="ECO:0007669"/>
    <property type="project" value="TreeGrafter"/>
</dbReference>
<dbReference type="GO" id="GO:0016874">
    <property type="term" value="F:ligase activity"/>
    <property type="evidence" value="ECO:0007669"/>
    <property type="project" value="UniProtKB-KW"/>
</dbReference>
<dbReference type="GO" id="GO:0031177">
    <property type="term" value="F:phosphopantetheine binding"/>
    <property type="evidence" value="ECO:0007669"/>
    <property type="project" value="InterPro"/>
</dbReference>
<dbReference type="GO" id="GO:0043041">
    <property type="term" value="P:amino acid activation for nonribosomal peptide biosynthetic process"/>
    <property type="evidence" value="ECO:0007669"/>
    <property type="project" value="TreeGrafter"/>
</dbReference>
<dbReference type="GO" id="GO:0044550">
    <property type="term" value="P:secondary metabolite biosynthetic process"/>
    <property type="evidence" value="ECO:0007669"/>
    <property type="project" value="TreeGrafter"/>
</dbReference>
<dbReference type="CDD" id="cd05918">
    <property type="entry name" value="A_NRPS_SidN3_like"/>
    <property type="match status" value="1"/>
</dbReference>
<dbReference type="CDD" id="cd19542">
    <property type="entry name" value="CT_NRPS-like"/>
    <property type="match status" value="1"/>
</dbReference>
<dbReference type="CDD" id="cd19545">
    <property type="entry name" value="FUM14_C_NRPS-like"/>
    <property type="match status" value="1"/>
</dbReference>
<dbReference type="FunFam" id="3.30.300.30:FF:000015">
    <property type="entry name" value="Nonribosomal peptide synthase SidD"/>
    <property type="match status" value="1"/>
</dbReference>
<dbReference type="FunFam" id="3.30.559.30:FF:000003">
    <property type="entry name" value="Nonribosomal peptide synthase SidD"/>
    <property type="match status" value="1"/>
</dbReference>
<dbReference type="FunFam" id="1.10.1200.10:FF:000005">
    <property type="entry name" value="Nonribosomal peptide synthetase 1"/>
    <property type="match status" value="2"/>
</dbReference>
<dbReference type="FunFam" id="3.40.50.12780:FF:000014">
    <property type="entry name" value="Nonribosomal peptide synthetase 1"/>
    <property type="match status" value="1"/>
</dbReference>
<dbReference type="Gene3D" id="3.30.300.30">
    <property type="match status" value="1"/>
</dbReference>
<dbReference type="Gene3D" id="1.10.1200.10">
    <property type="entry name" value="ACP-like"/>
    <property type="match status" value="3"/>
</dbReference>
<dbReference type="Gene3D" id="3.30.559.10">
    <property type="entry name" value="Chloramphenicol acetyltransferase-like domain"/>
    <property type="match status" value="2"/>
</dbReference>
<dbReference type="Gene3D" id="3.40.50.12780">
    <property type="entry name" value="N-terminal domain of ligase-like"/>
    <property type="match status" value="1"/>
</dbReference>
<dbReference type="Gene3D" id="3.30.559.30">
    <property type="entry name" value="Nonribosomal peptide synthetase, condensation domain"/>
    <property type="match status" value="2"/>
</dbReference>
<dbReference type="InterPro" id="IPR036736">
    <property type="entry name" value="ACP-like_sf"/>
</dbReference>
<dbReference type="InterPro" id="IPR045851">
    <property type="entry name" value="AMP-bd_C_sf"/>
</dbReference>
<dbReference type="InterPro" id="IPR020845">
    <property type="entry name" value="AMP-binding_CS"/>
</dbReference>
<dbReference type="InterPro" id="IPR000873">
    <property type="entry name" value="AMP-dep_synth/lig_dom"/>
</dbReference>
<dbReference type="InterPro" id="IPR042099">
    <property type="entry name" value="ANL_N_sf"/>
</dbReference>
<dbReference type="InterPro" id="IPR023213">
    <property type="entry name" value="CAT-like_dom_sf"/>
</dbReference>
<dbReference type="InterPro" id="IPR001242">
    <property type="entry name" value="Condensatn"/>
</dbReference>
<dbReference type="InterPro" id="IPR020806">
    <property type="entry name" value="PKS_PP-bd"/>
</dbReference>
<dbReference type="InterPro" id="IPR009081">
    <property type="entry name" value="PP-bd_ACP"/>
</dbReference>
<dbReference type="InterPro" id="IPR006162">
    <property type="entry name" value="Ppantetheine_attach_site"/>
</dbReference>
<dbReference type="PANTHER" id="PTHR45527:SF1">
    <property type="entry name" value="FATTY ACID SYNTHASE"/>
    <property type="match status" value="1"/>
</dbReference>
<dbReference type="PANTHER" id="PTHR45527">
    <property type="entry name" value="NONRIBOSOMAL PEPTIDE SYNTHETASE"/>
    <property type="match status" value="1"/>
</dbReference>
<dbReference type="Pfam" id="PF00501">
    <property type="entry name" value="AMP-binding"/>
    <property type="match status" value="1"/>
</dbReference>
<dbReference type="Pfam" id="PF00668">
    <property type="entry name" value="Condensation"/>
    <property type="match status" value="2"/>
</dbReference>
<dbReference type="Pfam" id="PF00550">
    <property type="entry name" value="PP-binding"/>
    <property type="match status" value="3"/>
</dbReference>
<dbReference type="SMART" id="SM00823">
    <property type="entry name" value="PKS_PP"/>
    <property type="match status" value="3"/>
</dbReference>
<dbReference type="SMART" id="SM01294">
    <property type="entry name" value="PKS_PP_betabranch"/>
    <property type="match status" value="1"/>
</dbReference>
<dbReference type="SUPFAM" id="SSF56801">
    <property type="entry name" value="Acetyl-CoA synthetase-like"/>
    <property type="match status" value="1"/>
</dbReference>
<dbReference type="SUPFAM" id="SSF47336">
    <property type="entry name" value="ACP-like"/>
    <property type="match status" value="3"/>
</dbReference>
<dbReference type="SUPFAM" id="SSF52777">
    <property type="entry name" value="CoA-dependent acyltransferases"/>
    <property type="match status" value="4"/>
</dbReference>
<dbReference type="PROSITE" id="PS00455">
    <property type="entry name" value="AMP_BINDING"/>
    <property type="match status" value="1"/>
</dbReference>
<dbReference type="PROSITE" id="PS50075">
    <property type="entry name" value="CARRIER"/>
    <property type="match status" value="3"/>
</dbReference>
<dbReference type="PROSITE" id="PS00012">
    <property type="entry name" value="PHOSPHOPANTETHEINE"/>
    <property type="match status" value="3"/>
</dbReference>
<feature type="chain" id="PRO_0000444386" description="Nonribosomal peptide synthetase 6">
    <location>
        <begin position="1"/>
        <end position="1761"/>
    </location>
</feature>
<feature type="domain" description="Carrier 1" evidence="3 11">
    <location>
        <begin position="600"/>
        <end position="675"/>
    </location>
</feature>
<feature type="domain" description="Carrier 2" evidence="3 11">
    <location>
        <begin position="1169"/>
        <end position="1242"/>
    </location>
</feature>
<feature type="domain" description="Carrier 3" evidence="3 11">
    <location>
        <begin position="1237"/>
        <end position="1313"/>
    </location>
</feature>
<feature type="region of interest" description="Adenylation" evidence="2 11">
    <location>
        <begin position="63"/>
        <end position="468"/>
    </location>
</feature>
<feature type="region of interest" description="Condensation 1" evidence="2 11">
    <location>
        <begin position="712"/>
        <end position="1135"/>
    </location>
</feature>
<feature type="region of interest" description="Condensation 2" evidence="2 11">
    <location>
        <begin position="1354"/>
        <end position="1677"/>
    </location>
</feature>
<feature type="modified residue" description="O-(pantetheine 4'-phosphoryl)serine" evidence="3">
    <location>
        <position position="636"/>
    </location>
</feature>
<feature type="modified residue" description="O-(pantetheine 4'-phosphoryl)serine" evidence="3">
    <location>
        <position position="1203"/>
    </location>
</feature>
<feature type="modified residue" description="O-(pantetheine 4'-phosphoryl)serine" evidence="3">
    <location>
        <position position="1274"/>
    </location>
</feature>
<protein>
    <recommendedName>
        <fullName evidence="8">Nonribosomal peptide synthetase 6</fullName>
        <shortName evidence="8">NPRS 6</shortName>
        <ecNumber evidence="11">6.3.2.-</ecNumber>
    </recommendedName>
    <alternativeName>
        <fullName evidence="9">Extracellular siderophore synthetase</fullName>
    </alternativeName>
</protein>